<organism>
    <name type="scientific">Staphylococcus saprophyticus subsp. saprophyticus (strain ATCC 15305 / DSM 20229 / NCIMB 8711 / NCTC 7292 / S-41)</name>
    <dbReference type="NCBI Taxonomy" id="342451"/>
    <lineage>
        <taxon>Bacteria</taxon>
        <taxon>Bacillati</taxon>
        <taxon>Bacillota</taxon>
        <taxon>Bacilli</taxon>
        <taxon>Bacillales</taxon>
        <taxon>Staphylococcaceae</taxon>
        <taxon>Staphylococcus</taxon>
    </lineage>
</organism>
<comment type="function">
    <text evidence="1">Required for replicative DNA synthesis. This DNA polymerase also exhibits 3' to 5' exonuclease activity.</text>
</comment>
<comment type="catalytic activity">
    <reaction evidence="1">
        <text>DNA(n) + a 2'-deoxyribonucleoside 5'-triphosphate = DNA(n+1) + diphosphate</text>
        <dbReference type="Rhea" id="RHEA:22508"/>
        <dbReference type="Rhea" id="RHEA-COMP:17339"/>
        <dbReference type="Rhea" id="RHEA-COMP:17340"/>
        <dbReference type="ChEBI" id="CHEBI:33019"/>
        <dbReference type="ChEBI" id="CHEBI:61560"/>
        <dbReference type="ChEBI" id="CHEBI:173112"/>
        <dbReference type="EC" id="2.7.7.7"/>
    </reaction>
</comment>
<comment type="subcellular location">
    <subcellularLocation>
        <location evidence="1">Cytoplasm</location>
    </subcellularLocation>
</comment>
<comment type="similarity">
    <text evidence="1">Belongs to the DNA polymerase type-C family. PolC subfamily.</text>
</comment>
<accession>Q49X49</accession>
<gene>
    <name evidence="1" type="primary">polC</name>
    <name type="ordered locus">SSP1504</name>
</gene>
<evidence type="ECO:0000255" key="1">
    <source>
        <dbReference type="HAMAP-Rule" id="MF_00356"/>
    </source>
</evidence>
<keyword id="KW-0963">Cytoplasm</keyword>
<keyword id="KW-0235">DNA replication</keyword>
<keyword id="KW-0239">DNA-directed DNA polymerase</keyword>
<keyword id="KW-0269">Exonuclease</keyword>
<keyword id="KW-0378">Hydrolase</keyword>
<keyword id="KW-0540">Nuclease</keyword>
<keyword id="KW-0548">Nucleotidyltransferase</keyword>
<keyword id="KW-1185">Reference proteome</keyword>
<keyword id="KW-0808">Transferase</keyword>
<protein>
    <recommendedName>
        <fullName evidence="1">DNA polymerase III PolC-type</fullName>
        <shortName evidence="1">PolIII</shortName>
        <ecNumber evidence="1">2.7.7.7</ecNumber>
    </recommendedName>
</protein>
<reference key="1">
    <citation type="journal article" date="2005" name="Proc. Natl. Acad. Sci. U.S.A.">
        <title>Whole genome sequence of Staphylococcus saprophyticus reveals the pathogenesis of uncomplicated urinary tract infection.</title>
        <authorList>
            <person name="Kuroda M."/>
            <person name="Yamashita A."/>
            <person name="Hirakawa H."/>
            <person name="Kumano M."/>
            <person name="Morikawa K."/>
            <person name="Higashide M."/>
            <person name="Maruyama A."/>
            <person name="Inose Y."/>
            <person name="Matoba K."/>
            <person name="Toh H."/>
            <person name="Kuhara S."/>
            <person name="Hattori M."/>
            <person name="Ohta T."/>
        </authorList>
    </citation>
    <scope>NUCLEOTIDE SEQUENCE [LARGE SCALE GENOMIC DNA]</scope>
    <source>
        <strain>ATCC 15305 / DSM 20229 / NCIMB 8711 / NCTC 7292 / S-41</strain>
    </source>
</reference>
<feature type="chain" id="PRO_1000048482" description="DNA polymerase III PolC-type">
    <location>
        <begin position="1"/>
        <end position="1438"/>
    </location>
</feature>
<feature type="domain" description="Exonuclease">
    <location>
        <begin position="422"/>
        <end position="578"/>
    </location>
</feature>
<sequence>MAMTNEEKFKILADQIKITEHLDSEILENSELTRVDVKTSDRTWVFQITFPHFLTIENYLLFTGAIIEEFKTIADVKCNFTVKDKTNQDEFAIKYFSHCIDQTKLSPKVKGQLKQKRLIMSGDVLKVMCQNDVERDHFDKACNGSLIAAYQQCGFNISKVVFETDSAVNDGDLASLEAHIQEEDEKSAREATEKLEKMKAEKAKQQDNNESDVSKCQIGKPIQVENVRQIDSIIEEEFKAAVEGVIFDINLKELKSGRHIVELKVTDYTDSLVLKMFTRKNKDDLAHFKALSVGKWVRAQGRIEEDTFVRDLVMMMSDIEEIKKATKQDKAEDKRVEFHLHTSMSQMDGIPNISDYVDQAAKWGHKAIAVTDHNVVQAFPDAHSAAEKNGIKMIYGMEGMLVDDGVPIAYKPKDCDLKTATYVVFDVETTGLSNQYDKIIELAAVKVKDGEIIDKFERFSNPHERLSETIKNLTHISDDMLVDAPEIEEVLTEFKSWVGDAIFVAHNASFDMGFIDTGYEHVGIGASTNGVIDTLELSRTINTEYGKHGLNFLAKKYGVELTQHHRAIYDTEATAYMFIKMLKQLEALGVHNHQDINTSLSNEDAYKRARPNHVTLIVQNQDGLKNLFKIVSASLVQYYYRTPRIPRSLLDEYREGILVGSACDEGEVFTAVMQKDQSQVERIAKYYDFIEVQPPALYQDLIDRELVRDNETLHEIYNRLIRAGDVNNIPVIATGNAHYLNEHDAIARKILIAAQPGNPLNRSTLPKAHFRTTDEMLDELHFLGEEKAYELVVQNTNDLADKIERVVPIKDELFTPRMEGANEEIREMSYDNAKALYGDDLPQIVIDRLEKELESIIGNGFSVIYLISQRLVKKSLNDGYLVGSRGSVGSSFVATMTEITEVNPLPPHYICPECKQSEFFDDGSVGSGFDLPDKKCESCGCDLIKEGQDIPFETFLGFKGDKVPDIDLNFSGEYQPEAHNYTKELFGEDKVFRAGTIGTVAEKTAFGFVKGYLNDQGIHKRGAEIDRLVKGCTGVKRTTGQHPGGIIVVPDYMDIYDFTPVQFPADDQGSSWMTTHFDFHSIHDNVLKLDILGHDDPTMIRMLQDLSGIDPKTIPVDDKETMGIFSSPEPLGVTSDEILCKTGTFGVPEFGTGFVRQMLEDTKPTTFSELVRISGLSHGTDVWLGNAQDLIRSGKCDLASVICCRDDIMVYLMYNGLEPSLAFKTMEFVRKGKGLTDDMVEAMVDNEVPDWYLDSCRKIKYMFPKAHAAAYVLMAVRIAYFKVHYPLYYYASYFTVRASDFDLISMIKDKESIRNTVNDMYSRYMDLAKKEKDTLTVLEIMNEMAQRGYRMQPISLEKSKAFEFIIEGDTLIPPFIAVPGLGENVAQRIVEARDEGPFLSKEDLNKKAGLSQKVIEYLDELGSLPNLPDKAQLSIFDM</sequence>
<dbReference type="EC" id="2.7.7.7" evidence="1"/>
<dbReference type="EMBL" id="AP008934">
    <property type="protein sequence ID" value="BAE18649.1"/>
    <property type="molecule type" value="Genomic_DNA"/>
</dbReference>
<dbReference type="RefSeq" id="WP_011303258.1">
    <property type="nucleotide sequence ID" value="NZ_MTGA01000034.1"/>
</dbReference>
<dbReference type="SMR" id="Q49X49"/>
<dbReference type="GeneID" id="3617246"/>
<dbReference type="KEGG" id="ssp:SSP1504"/>
<dbReference type="PATRIC" id="fig|342451.11.peg.1506"/>
<dbReference type="eggNOG" id="COG2176">
    <property type="taxonomic scope" value="Bacteria"/>
</dbReference>
<dbReference type="HOGENOM" id="CLU_003297_2_0_9"/>
<dbReference type="OrthoDB" id="9804290at2"/>
<dbReference type="Proteomes" id="UP000006371">
    <property type="component" value="Chromosome"/>
</dbReference>
<dbReference type="GO" id="GO:0005737">
    <property type="term" value="C:cytoplasm"/>
    <property type="evidence" value="ECO:0007669"/>
    <property type="project" value="UniProtKB-SubCell"/>
</dbReference>
<dbReference type="GO" id="GO:0008408">
    <property type="term" value="F:3'-5' exonuclease activity"/>
    <property type="evidence" value="ECO:0007669"/>
    <property type="project" value="UniProtKB-UniRule"/>
</dbReference>
<dbReference type="GO" id="GO:0003677">
    <property type="term" value="F:DNA binding"/>
    <property type="evidence" value="ECO:0007669"/>
    <property type="project" value="UniProtKB-UniRule"/>
</dbReference>
<dbReference type="GO" id="GO:0003887">
    <property type="term" value="F:DNA-directed DNA polymerase activity"/>
    <property type="evidence" value="ECO:0007669"/>
    <property type="project" value="UniProtKB-UniRule"/>
</dbReference>
<dbReference type="GO" id="GO:0006261">
    <property type="term" value="P:DNA-templated DNA replication"/>
    <property type="evidence" value="ECO:0007669"/>
    <property type="project" value="UniProtKB-UniRule"/>
</dbReference>
<dbReference type="CDD" id="cd06127">
    <property type="entry name" value="DEDDh"/>
    <property type="match status" value="1"/>
</dbReference>
<dbReference type="CDD" id="cd07435">
    <property type="entry name" value="PHP_PolIIIA_POLC"/>
    <property type="match status" value="1"/>
</dbReference>
<dbReference type="CDD" id="cd04484">
    <property type="entry name" value="polC_OBF"/>
    <property type="match status" value="1"/>
</dbReference>
<dbReference type="FunFam" id="3.30.420.10:FF:000045">
    <property type="entry name" value="3'-5' exonuclease DinG"/>
    <property type="match status" value="1"/>
</dbReference>
<dbReference type="Gene3D" id="1.10.150.870">
    <property type="match status" value="1"/>
</dbReference>
<dbReference type="Gene3D" id="3.30.1900.20">
    <property type="match status" value="2"/>
</dbReference>
<dbReference type="Gene3D" id="6.10.140.1510">
    <property type="match status" value="1"/>
</dbReference>
<dbReference type="Gene3D" id="3.20.20.140">
    <property type="entry name" value="Metal-dependent hydrolases"/>
    <property type="match status" value="1"/>
</dbReference>
<dbReference type="Gene3D" id="2.40.50.140">
    <property type="entry name" value="Nucleic acid-binding proteins"/>
    <property type="match status" value="1"/>
</dbReference>
<dbReference type="Gene3D" id="1.10.150.700">
    <property type="entry name" value="PolC, middle finger domain"/>
    <property type="match status" value="1"/>
</dbReference>
<dbReference type="Gene3D" id="3.30.420.10">
    <property type="entry name" value="Ribonuclease H-like superfamily/Ribonuclease H"/>
    <property type="match status" value="1"/>
</dbReference>
<dbReference type="HAMAP" id="MF_00356">
    <property type="entry name" value="DNApol_PolC"/>
    <property type="match status" value="1"/>
</dbReference>
<dbReference type="InterPro" id="IPR011708">
    <property type="entry name" value="DNA_pol3_alpha_NTPase_dom"/>
</dbReference>
<dbReference type="InterPro" id="IPR040982">
    <property type="entry name" value="DNA_pol3_finger"/>
</dbReference>
<dbReference type="InterPro" id="IPR024754">
    <property type="entry name" value="DNA_PolC-like_N_II"/>
</dbReference>
<dbReference type="InterPro" id="IPR028112">
    <property type="entry name" value="DNA_PolC-type_N_I"/>
</dbReference>
<dbReference type="InterPro" id="IPR004805">
    <property type="entry name" value="DnaE2/DnaE/PolC"/>
</dbReference>
<dbReference type="InterPro" id="IPR029460">
    <property type="entry name" value="DNAPol_HHH"/>
</dbReference>
<dbReference type="InterPro" id="IPR006054">
    <property type="entry name" value="DnaQ"/>
</dbReference>
<dbReference type="InterPro" id="IPR013520">
    <property type="entry name" value="Exonuclease_RNaseT/DNA_pol3"/>
</dbReference>
<dbReference type="InterPro" id="IPR012340">
    <property type="entry name" value="NA-bd_OB-fold"/>
</dbReference>
<dbReference type="InterPro" id="IPR004013">
    <property type="entry name" value="PHP_dom"/>
</dbReference>
<dbReference type="InterPro" id="IPR003141">
    <property type="entry name" value="Pol/His_phosphatase_N"/>
</dbReference>
<dbReference type="InterPro" id="IPR006308">
    <property type="entry name" value="Pol_III_a_PolC-type_gram_pos"/>
</dbReference>
<dbReference type="InterPro" id="IPR044923">
    <property type="entry name" value="PolC_middle_finger_sf"/>
</dbReference>
<dbReference type="InterPro" id="IPR012337">
    <property type="entry name" value="RNaseH-like_sf"/>
</dbReference>
<dbReference type="InterPro" id="IPR036397">
    <property type="entry name" value="RNaseH_sf"/>
</dbReference>
<dbReference type="NCBIfam" id="TIGR00573">
    <property type="entry name" value="dnaq"/>
    <property type="match status" value="1"/>
</dbReference>
<dbReference type="NCBIfam" id="TIGR01405">
    <property type="entry name" value="polC_Gram_pos"/>
    <property type="match status" value="1"/>
</dbReference>
<dbReference type="NCBIfam" id="NF001688">
    <property type="entry name" value="PRK00448.1"/>
    <property type="match status" value="1"/>
</dbReference>
<dbReference type="PANTHER" id="PTHR32294:SF5">
    <property type="entry name" value="DNA POLYMERASE III POLC-TYPE"/>
    <property type="match status" value="1"/>
</dbReference>
<dbReference type="PANTHER" id="PTHR32294">
    <property type="entry name" value="DNA POLYMERASE III SUBUNIT ALPHA"/>
    <property type="match status" value="1"/>
</dbReference>
<dbReference type="Pfam" id="PF14480">
    <property type="entry name" value="DNA_pol3_a_NI"/>
    <property type="match status" value="1"/>
</dbReference>
<dbReference type="Pfam" id="PF11490">
    <property type="entry name" value="DNA_pol3_a_NII"/>
    <property type="match status" value="1"/>
</dbReference>
<dbReference type="Pfam" id="PF07733">
    <property type="entry name" value="DNA_pol3_alpha"/>
    <property type="match status" value="2"/>
</dbReference>
<dbReference type="Pfam" id="PF17657">
    <property type="entry name" value="DNA_pol3_finger"/>
    <property type="match status" value="1"/>
</dbReference>
<dbReference type="Pfam" id="PF14579">
    <property type="entry name" value="HHH_6"/>
    <property type="match status" value="1"/>
</dbReference>
<dbReference type="Pfam" id="PF02811">
    <property type="entry name" value="PHP"/>
    <property type="match status" value="2"/>
</dbReference>
<dbReference type="Pfam" id="PF00929">
    <property type="entry name" value="RNase_T"/>
    <property type="match status" value="1"/>
</dbReference>
<dbReference type="SMART" id="SM00479">
    <property type="entry name" value="EXOIII"/>
    <property type="match status" value="1"/>
</dbReference>
<dbReference type="SMART" id="SM00481">
    <property type="entry name" value="POLIIIAc"/>
    <property type="match status" value="1"/>
</dbReference>
<dbReference type="SUPFAM" id="SSF81585">
    <property type="entry name" value="PsbU/PolX domain-like"/>
    <property type="match status" value="1"/>
</dbReference>
<dbReference type="SUPFAM" id="SSF53098">
    <property type="entry name" value="Ribonuclease H-like"/>
    <property type="match status" value="1"/>
</dbReference>
<proteinExistence type="inferred from homology"/>
<name>DPO3_STAS1</name>